<reference key="1">
    <citation type="journal article" date="2009" name="J. Bacteriol.">
        <title>The genome of Burkholderia cenocepacia J2315, an epidemic pathogen of cystic fibrosis patients.</title>
        <authorList>
            <person name="Holden M.T."/>
            <person name="Seth-Smith H.M."/>
            <person name="Crossman L.C."/>
            <person name="Sebaihia M."/>
            <person name="Bentley S.D."/>
            <person name="Cerdeno-Tarraga A.M."/>
            <person name="Thomson N.R."/>
            <person name="Bason N."/>
            <person name="Quail M.A."/>
            <person name="Sharp S."/>
            <person name="Cherevach I."/>
            <person name="Churcher C."/>
            <person name="Goodhead I."/>
            <person name="Hauser H."/>
            <person name="Holroyd N."/>
            <person name="Mungall K."/>
            <person name="Scott P."/>
            <person name="Walker D."/>
            <person name="White B."/>
            <person name="Rose H."/>
            <person name="Iversen P."/>
            <person name="Mil-Homens D."/>
            <person name="Rocha E.P."/>
            <person name="Fialho A.M."/>
            <person name="Baldwin A."/>
            <person name="Dowson C."/>
            <person name="Barrell B.G."/>
            <person name="Govan J.R."/>
            <person name="Vandamme P."/>
            <person name="Hart C.A."/>
            <person name="Mahenthiralingam E."/>
            <person name="Parkhill J."/>
        </authorList>
    </citation>
    <scope>NUCLEOTIDE SEQUENCE [LARGE SCALE GENOMIC DNA]</scope>
    <source>
        <strain>ATCC BAA-245 / DSM 16553 / LMG 16656 / NCTC 13227 / J2315 / CF5610</strain>
    </source>
</reference>
<feature type="chain" id="PRO_1000135089" description="1-(5-phosphoribosyl)-5-[(5-phosphoribosylamino)methylideneamino] imidazole-4-carboxamide isomerase">
    <location>
        <begin position="1"/>
        <end position="251"/>
    </location>
</feature>
<feature type="active site" description="Proton acceptor" evidence="1">
    <location>
        <position position="8"/>
    </location>
</feature>
<feature type="active site" description="Proton donor" evidence="1">
    <location>
        <position position="131"/>
    </location>
</feature>
<organism>
    <name type="scientific">Burkholderia cenocepacia (strain ATCC BAA-245 / DSM 16553 / LMG 16656 / NCTC 13227 / J2315 / CF5610)</name>
    <name type="common">Burkholderia cepacia (strain J2315)</name>
    <dbReference type="NCBI Taxonomy" id="216591"/>
    <lineage>
        <taxon>Bacteria</taxon>
        <taxon>Pseudomonadati</taxon>
        <taxon>Pseudomonadota</taxon>
        <taxon>Betaproteobacteria</taxon>
        <taxon>Burkholderiales</taxon>
        <taxon>Burkholderiaceae</taxon>
        <taxon>Burkholderia</taxon>
        <taxon>Burkholderia cepacia complex</taxon>
    </lineage>
</organism>
<protein>
    <recommendedName>
        <fullName evidence="1">1-(5-phosphoribosyl)-5-[(5-phosphoribosylamino)methylideneamino] imidazole-4-carboxamide isomerase</fullName>
        <ecNumber evidence="1">5.3.1.16</ecNumber>
    </recommendedName>
    <alternativeName>
        <fullName evidence="1">Phosphoribosylformimino-5-aminoimidazole carboxamide ribotide isomerase</fullName>
    </alternativeName>
</protein>
<sequence length="251" mass="26574">MLLIPAIDLKDGQCVRLKQGDMDQATIFSEDPAAMARKWVDLGARRLHLVDLNGAFAGKPKNLEAIEAILDEVGDEIPVQLGGGIRSLETIEKYLDAGLSYVIIGTAAVKNPGFLQDACTAFSGSIIVGLDAKDGKVATDGWSKLTGHEVIDLAKKFEDYGVESIVYTDIGRDGMLQGINIDATVKLAQAVGIPVIASGGLSNLTDIESLCEVEEHGVEGVICGRAIYSGDLDFAAAQKRADELNGELDNA</sequence>
<accession>B4E640</accession>
<proteinExistence type="inferred from homology"/>
<comment type="catalytic activity">
    <reaction evidence="1">
        <text>1-(5-phospho-beta-D-ribosyl)-5-[(5-phospho-beta-D-ribosylamino)methylideneamino]imidazole-4-carboxamide = 5-[(5-phospho-1-deoxy-D-ribulos-1-ylimino)methylamino]-1-(5-phospho-beta-D-ribosyl)imidazole-4-carboxamide</text>
        <dbReference type="Rhea" id="RHEA:15469"/>
        <dbReference type="ChEBI" id="CHEBI:58435"/>
        <dbReference type="ChEBI" id="CHEBI:58525"/>
        <dbReference type="EC" id="5.3.1.16"/>
    </reaction>
</comment>
<comment type="pathway">
    <text evidence="1">Amino-acid biosynthesis; L-histidine biosynthesis; L-histidine from 5-phospho-alpha-D-ribose 1-diphosphate: step 4/9.</text>
</comment>
<comment type="subcellular location">
    <subcellularLocation>
        <location evidence="1">Cytoplasm</location>
    </subcellularLocation>
</comment>
<comment type="similarity">
    <text evidence="1">Belongs to the HisA/HisF family.</text>
</comment>
<keyword id="KW-0028">Amino-acid biosynthesis</keyword>
<keyword id="KW-0963">Cytoplasm</keyword>
<keyword id="KW-0368">Histidine biosynthesis</keyword>
<keyword id="KW-0413">Isomerase</keyword>
<dbReference type="EC" id="5.3.1.16" evidence="1"/>
<dbReference type="EMBL" id="AM747720">
    <property type="protein sequence ID" value="CAR50627.1"/>
    <property type="molecule type" value="Genomic_DNA"/>
</dbReference>
<dbReference type="RefSeq" id="WP_006477123.1">
    <property type="nucleotide sequence ID" value="NC_011000.1"/>
</dbReference>
<dbReference type="SMR" id="B4E640"/>
<dbReference type="GeneID" id="83047212"/>
<dbReference type="KEGG" id="bcj:BCAL0317"/>
<dbReference type="eggNOG" id="COG0106">
    <property type="taxonomic scope" value="Bacteria"/>
</dbReference>
<dbReference type="HOGENOM" id="CLU_048577_1_1_4"/>
<dbReference type="BioCyc" id="BCEN216591:G1G1V-362-MONOMER"/>
<dbReference type="UniPathway" id="UPA00031">
    <property type="reaction ID" value="UER00009"/>
</dbReference>
<dbReference type="Proteomes" id="UP000001035">
    <property type="component" value="Chromosome 1"/>
</dbReference>
<dbReference type="GO" id="GO:0005737">
    <property type="term" value="C:cytoplasm"/>
    <property type="evidence" value="ECO:0007669"/>
    <property type="project" value="UniProtKB-SubCell"/>
</dbReference>
<dbReference type="GO" id="GO:0003949">
    <property type="term" value="F:1-(5-phosphoribosyl)-5-[(5-phosphoribosylamino)methylideneamino]imidazole-4-carboxamide isomerase activity"/>
    <property type="evidence" value="ECO:0007669"/>
    <property type="project" value="UniProtKB-UniRule"/>
</dbReference>
<dbReference type="GO" id="GO:0000105">
    <property type="term" value="P:L-histidine biosynthetic process"/>
    <property type="evidence" value="ECO:0007669"/>
    <property type="project" value="UniProtKB-UniRule"/>
</dbReference>
<dbReference type="GO" id="GO:0000162">
    <property type="term" value="P:L-tryptophan biosynthetic process"/>
    <property type="evidence" value="ECO:0007669"/>
    <property type="project" value="TreeGrafter"/>
</dbReference>
<dbReference type="CDD" id="cd04732">
    <property type="entry name" value="HisA"/>
    <property type="match status" value="1"/>
</dbReference>
<dbReference type="FunFam" id="3.20.20.70:FF:000009">
    <property type="entry name" value="1-(5-phosphoribosyl)-5-[(5-phosphoribosylamino)methylideneamino] imidazole-4-carboxamide isomerase"/>
    <property type="match status" value="1"/>
</dbReference>
<dbReference type="Gene3D" id="3.20.20.70">
    <property type="entry name" value="Aldolase class I"/>
    <property type="match status" value="1"/>
</dbReference>
<dbReference type="HAMAP" id="MF_01014">
    <property type="entry name" value="HisA"/>
    <property type="match status" value="1"/>
</dbReference>
<dbReference type="InterPro" id="IPR013785">
    <property type="entry name" value="Aldolase_TIM"/>
</dbReference>
<dbReference type="InterPro" id="IPR006062">
    <property type="entry name" value="His_biosynth"/>
</dbReference>
<dbReference type="InterPro" id="IPR006063">
    <property type="entry name" value="HisA_bact_arch"/>
</dbReference>
<dbReference type="InterPro" id="IPR044524">
    <property type="entry name" value="Isoase_HisA-like"/>
</dbReference>
<dbReference type="InterPro" id="IPR023016">
    <property type="entry name" value="Isoase_HisA-like_bact"/>
</dbReference>
<dbReference type="InterPro" id="IPR011060">
    <property type="entry name" value="RibuloseP-bd_barrel"/>
</dbReference>
<dbReference type="NCBIfam" id="TIGR00007">
    <property type="entry name" value="1-(5-phosphoribosyl)-5-[(5-phosphoribosylamino)methylideneamino]imidazole-4-carboxamide isomerase"/>
    <property type="match status" value="1"/>
</dbReference>
<dbReference type="NCBIfam" id="NF010112">
    <property type="entry name" value="PRK13585.1"/>
    <property type="match status" value="1"/>
</dbReference>
<dbReference type="PANTHER" id="PTHR43090">
    <property type="entry name" value="1-(5-PHOSPHORIBOSYL)-5-[(5-PHOSPHORIBOSYLAMINO)METHYLIDENEAMINO] IMIDAZOLE-4-CARBOXAMIDE ISOMERASE"/>
    <property type="match status" value="1"/>
</dbReference>
<dbReference type="PANTHER" id="PTHR43090:SF2">
    <property type="entry name" value="1-(5-PHOSPHORIBOSYL)-5-[(5-PHOSPHORIBOSYLAMINO)METHYLIDENEAMINO] IMIDAZOLE-4-CARBOXAMIDE ISOMERASE"/>
    <property type="match status" value="1"/>
</dbReference>
<dbReference type="Pfam" id="PF00977">
    <property type="entry name" value="His_biosynth"/>
    <property type="match status" value="1"/>
</dbReference>
<dbReference type="SUPFAM" id="SSF51366">
    <property type="entry name" value="Ribulose-phoshate binding barrel"/>
    <property type="match status" value="1"/>
</dbReference>
<gene>
    <name evidence="1" type="primary">hisA</name>
    <name type="ordered locus">BceJ2315_03190</name>
    <name type="ORF">BCAL0317</name>
</gene>
<name>HIS4_BURCJ</name>
<evidence type="ECO:0000255" key="1">
    <source>
        <dbReference type="HAMAP-Rule" id="MF_01014"/>
    </source>
</evidence>